<evidence type="ECO:0000255" key="1">
    <source>
        <dbReference type="HAMAP-Rule" id="MF_00391"/>
    </source>
</evidence>
<evidence type="ECO:0000305" key="2"/>
<comment type="similarity">
    <text evidence="1">Belongs to the bacterial ribosomal protein bL34 family.</text>
</comment>
<accession>Q1QS96</accession>
<feature type="chain" id="PRO_1000013316" description="Large ribosomal subunit protein bL34">
    <location>
        <begin position="1"/>
        <end position="44"/>
    </location>
</feature>
<keyword id="KW-1185">Reference proteome</keyword>
<keyword id="KW-0687">Ribonucleoprotein</keyword>
<keyword id="KW-0689">Ribosomal protein</keyword>
<protein>
    <recommendedName>
        <fullName evidence="1">Large ribosomal subunit protein bL34</fullName>
    </recommendedName>
    <alternativeName>
        <fullName evidence="2">50S ribosomal protein L34</fullName>
    </alternativeName>
</protein>
<gene>
    <name evidence="1" type="primary">rpmH</name>
    <name type="ordered locus">Csal_3318</name>
</gene>
<organism>
    <name type="scientific">Chromohalobacter salexigens (strain ATCC BAA-138 / DSM 3043 / CIP 106854 / NCIMB 13768 / 1H11)</name>
    <dbReference type="NCBI Taxonomy" id="290398"/>
    <lineage>
        <taxon>Bacteria</taxon>
        <taxon>Pseudomonadati</taxon>
        <taxon>Pseudomonadota</taxon>
        <taxon>Gammaproteobacteria</taxon>
        <taxon>Oceanospirillales</taxon>
        <taxon>Halomonadaceae</taxon>
        <taxon>Chromohalobacter</taxon>
    </lineage>
</organism>
<name>RL34_CHRSD</name>
<dbReference type="EMBL" id="CP000285">
    <property type="protein sequence ID" value="ABE60662.1"/>
    <property type="molecule type" value="Genomic_DNA"/>
</dbReference>
<dbReference type="RefSeq" id="WP_011508608.1">
    <property type="nucleotide sequence ID" value="NC_007963.1"/>
</dbReference>
<dbReference type="SMR" id="Q1QS96"/>
<dbReference type="STRING" id="290398.Csal_3318"/>
<dbReference type="GeneID" id="95336009"/>
<dbReference type="KEGG" id="csa:Csal_3318"/>
<dbReference type="eggNOG" id="COG0230">
    <property type="taxonomic scope" value="Bacteria"/>
</dbReference>
<dbReference type="HOGENOM" id="CLU_129938_2_0_6"/>
<dbReference type="OrthoDB" id="9804164at2"/>
<dbReference type="Proteomes" id="UP000000239">
    <property type="component" value="Chromosome"/>
</dbReference>
<dbReference type="GO" id="GO:1990904">
    <property type="term" value="C:ribonucleoprotein complex"/>
    <property type="evidence" value="ECO:0007669"/>
    <property type="project" value="UniProtKB-KW"/>
</dbReference>
<dbReference type="GO" id="GO:0005840">
    <property type="term" value="C:ribosome"/>
    <property type="evidence" value="ECO:0007669"/>
    <property type="project" value="UniProtKB-KW"/>
</dbReference>
<dbReference type="GO" id="GO:0003735">
    <property type="term" value="F:structural constituent of ribosome"/>
    <property type="evidence" value="ECO:0007669"/>
    <property type="project" value="InterPro"/>
</dbReference>
<dbReference type="GO" id="GO:0006412">
    <property type="term" value="P:translation"/>
    <property type="evidence" value="ECO:0007669"/>
    <property type="project" value="UniProtKB-UniRule"/>
</dbReference>
<dbReference type="FunFam" id="1.10.287.3980:FF:000001">
    <property type="entry name" value="Mitochondrial ribosomal protein L34"/>
    <property type="match status" value="1"/>
</dbReference>
<dbReference type="Gene3D" id="1.10.287.3980">
    <property type="match status" value="1"/>
</dbReference>
<dbReference type="HAMAP" id="MF_00391">
    <property type="entry name" value="Ribosomal_bL34"/>
    <property type="match status" value="1"/>
</dbReference>
<dbReference type="InterPro" id="IPR000271">
    <property type="entry name" value="Ribosomal_bL34"/>
</dbReference>
<dbReference type="InterPro" id="IPR020939">
    <property type="entry name" value="Ribosomal_bL34_CS"/>
</dbReference>
<dbReference type="NCBIfam" id="TIGR01030">
    <property type="entry name" value="rpmH_bact"/>
    <property type="match status" value="1"/>
</dbReference>
<dbReference type="PANTHER" id="PTHR14503:SF4">
    <property type="entry name" value="LARGE RIBOSOMAL SUBUNIT PROTEIN BL34M"/>
    <property type="match status" value="1"/>
</dbReference>
<dbReference type="PANTHER" id="PTHR14503">
    <property type="entry name" value="MITOCHONDRIAL RIBOSOMAL PROTEIN 34 FAMILY MEMBER"/>
    <property type="match status" value="1"/>
</dbReference>
<dbReference type="Pfam" id="PF00468">
    <property type="entry name" value="Ribosomal_L34"/>
    <property type="match status" value="1"/>
</dbReference>
<dbReference type="PROSITE" id="PS00784">
    <property type="entry name" value="RIBOSOMAL_L34"/>
    <property type="match status" value="1"/>
</dbReference>
<sequence length="44" mass="5206">MKRTFQPSVLKRKRVHGFRARMATKNGRQVLARRRAKGRKRLSA</sequence>
<reference key="1">
    <citation type="journal article" date="2011" name="Stand. Genomic Sci.">
        <title>Complete genome sequence of the halophilic and highly halotolerant Chromohalobacter salexigens type strain (1H11(T)).</title>
        <authorList>
            <person name="Copeland A."/>
            <person name="O'Connor K."/>
            <person name="Lucas S."/>
            <person name="Lapidus A."/>
            <person name="Berry K.W."/>
            <person name="Detter J.C."/>
            <person name="Del Rio T.G."/>
            <person name="Hammon N."/>
            <person name="Dalin E."/>
            <person name="Tice H."/>
            <person name="Pitluck S."/>
            <person name="Bruce D."/>
            <person name="Goodwin L."/>
            <person name="Han C."/>
            <person name="Tapia R."/>
            <person name="Saunders E."/>
            <person name="Schmutz J."/>
            <person name="Brettin T."/>
            <person name="Larimer F."/>
            <person name="Land M."/>
            <person name="Hauser L."/>
            <person name="Vargas C."/>
            <person name="Nieto J.J."/>
            <person name="Kyrpides N.C."/>
            <person name="Ivanova N."/>
            <person name="Goker M."/>
            <person name="Klenk H.P."/>
            <person name="Csonka L.N."/>
            <person name="Woyke T."/>
        </authorList>
    </citation>
    <scope>NUCLEOTIDE SEQUENCE [LARGE SCALE GENOMIC DNA]</scope>
    <source>
        <strain>ATCC BAA-138 / DSM 3043 / CIP 106854 / NCIMB 13768 / 1H11</strain>
    </source>
</reference>
<proteinExistence type="inferred from homology"/>